<evidence type="ECO:0000255" key="1">
    <source>
        <dbReference type="HAMAP-Rule" id="MF_01200"/>
    </source>
</evidence>
<accession>Q1G991</accession>
<protein>
    <recommendedName>
        <fullName evidence="1">Orotidine 5'-phosphate decarboxylase</fullName>
        <ecNumber evidence="1">4.1.1.23</ecNumber>
    </recommendedName>
    <alternativeName>
        <fullName evidence="1">OMP decarboxylase</fullName>
        <shortName evidence="1">OMPDCase</shortName>
        <shortName evidence="1">OMPdecase</shortName>
    </alternativeName>
</protein>
<proteinExistence type="inferred from homology"/>
<dbReference type="EC" id="4.1.1.23" evidence="1"/>
<dbReference type="EMBL" id="CR954253">
    <property type="protein sequence ID" value="CAI98331.1"/>
    <property type="molecule type" value="Genomic_DNA"/>
</dbReference>
<dbReference type="RefSeq" id="WP_003620198.1">
    <property type="nucleotide sequence ID" value="NZ_JQAV01000018.1"/>
</dbReference>
<dbReference type="SMR" id="Q1G991"/>
<dbReference type="STRING" id="390333.Ldb1531"/>
<dbReference type="KEGG" id="ldb:Ldb1531"/>
<dbReference type="PATRIC" id="fig|390333.13.peg.868"/>
<dbReference type="eggNOG" id="COG0284">
    <property type="taxonomic scope" value="Bacteria"/>
</dbReference>
<dbReference type="HOGENOM" id="CLU_067069_1_1_9"/>
<dbReference type="BioCyc" id="LDEL390333:LDB_RS06610-MONOMER"/>
<dbReference type="UniPathway" id="UPA00070">
    <property type="reaction ID" value="UER00120"/>
</dbReference>
<dbReference type="Proteomes" id="UP000001259">
    <property type="component" value="Chromosome"/>
</dbReference>
<dbReference type="GO" id="GO:0005829">
    <property type="term" value="C:cytosol"/>
    <property type="evidence" value="ECO:0007669"/>
    <property type="project" value="TreeGrafter"/>
</dbReference>
<dbReference type="GO" id="GO:0004590">
    <property type="term" value="F:orotidine-5'-phosphate decarboxylase activity"/>
    <property type="evidence" value="ECO:0007669"/>
    <property type="project" value="UniProtKB-UniRule"/>
</dbReference>
<dbReference type="GO" id="GO:0006207">
    <property type="term" value="P:'de novo' pyrimidine nucleobase biosynthetic process"/>
    <property type="evidence" value="ECO:0007669"/>
    <property type="project" value="InterPro"/>
</dbReference>
<dbReference type="GO" id="GO:0044205">
    <property type="term" value="P:'de novo' UMP biosynthetic process"/>
    <property type="evidence" value="ECO:0007669"/>
    <property type="project" value="UniProtKB-UniRule"/>
</dbReference>
<dbReference type="CDD" id="cd04725">
    <property type="entry name" value="OMP_decarboxylase_like"/>
    <property type="match status" value="1"/>
</dbReference>
<dbReference type="FunFam" id="3.20.20.70:FF:000015">
    <property type="entry name" value="Orotidine 5'-phosphate decarboxylase"/>
    <property type="match status" value="1"/>
</dbReference>
<dbReference type="Gene3D" id="3.20.20.70">
    <property type="entry name" value="Aldolase class I"/>
    <property type="match status" value="1"/>
</dbReference>
<dbReference type="HAMAP" id="MF_01200_B">
    <property type="entry name" value="OMPdecase_type1_B"/>
    <property type="match status" value="1"/>
</dbReference>
<dbReference type="InterPro" id="IPR013785">
    <property type="entry name" value="Aldolase_TIM"/>
</dbReference>
<dbReference type="InterPro" id="IPR014732">
    <property type="entry name" value="OMPdecase"/>
</dbReference>
<dbReference type="InterPro" id="IPR018089">
    <property type="entry name" value="OMPdecase_AS"/>
</dbReference>
<dbReference type="InterPro" id="IPR047596">
    <property type="entry name" value="OMPdecase_bac"/>
</dbReference>
<dbReference type="InterPro" id="IPR001754">
    <property type="entry name" value="OMPdeCOase_dom"/>
</dbReference>
<dbReference type="InterPro" id="IPR011060">
    <property type="entry name" value="RibuloseP-bd_barrel"/>
</dbReference>
<dbReference type="NCBIfam" id="NF001273">
    <property type="entry name" value="PRK00230.1"/>
    <property type="match status" value="1"/>
</dbReference>
<dbReference type="NCBIfam" id="TIGR01740">
    <property type="entry name" value="pyrF"/>
    <property type="match status" value="1"/>
</dbReference>
<dbReference type="PANTHER" id="PTHR32119">
    <property type="entry name" value="OROTIDINE 5'-PHOSPHATE DECARBOXYLASE"/>
    <property type="match status" value="1"/>
</dbReference>
<dbReference type="PANTHER" id="PTHR32119:SF2">
    <property type="entry name" value="OROTIDINE 5'-PHOSPHATE DECARBOXYLASE"/>
    <property type="match status" value="1"/>
</dbReference>
<dbReference type="Pfam" id="PF00215">
    <property type="entry name" value="OMPdecase"/>
    <property type="match status" value="1"/>
</dbReference>
<dbReference type="SMART" id="SM00934">
    <property type="entry name" value="OMPdecase"/>
    <property type="match status" value="1"/>
</dbReference>
<dbReference type="SUPFAM" id="SSF51366">
    <property type="entry name" value="Ribulose-phoshate binding barrel"/>
    <property type="match status" value="1"/>
</dbReference>
<dbReference type="PROSITE" id="PS00156">
    <property type="entry name" value="OMPDECASE"/>
    <property type="match status" value="1"/>
</dbReference>
<feature type="chain" id="PRO_1000065912" description="Orotidine 5'-phosphate decarboxylase">
    <location>
        <begin position="1"/>
        <end position="240"/>
    </location>
</feature>
<feature type="active site" description="Proton donor" evidence="1">
    <location>
        <position position="62"/>
    </location>
</feature>
<feature type="binding site" evidence="1">
    <location>
        <position position="10"/>
    </location>
    <ligand>
        <name>substrate</name>
    </ligand>
</feature>
<feature type="binding site" evidence="1">
    <location>
        <position position="33"/>
    </location>
    <ligand>
        <name>substrate</name>
    </ligand>
</feature>
<feature type="binding site" evidence="1">
    <location>
        <begin position="60"/>
        <end position="69"/>
    </location>
    <ligand>
        <name>substrate</name>
    </ligand>
</feature>
<feature type="binding site" evidence="1">
    <location>
        <position position="123"/>
    </location>
    <ligand>
        <name>substrate</name>
    </ligand>
</feature>
<feature type="binding site" evidence="1">
    <location>
        <position position="185"/>
    </location>
    <ligand>
        <name>substrate</name>
    </ligand>
</feature>
<feature type="binding site" evidence="1">
    <location>
        <position position="194"/>
    </location>
    <ligand>
        <name>substrate</name>
    </ligand>
</feature>
<feature type="binding site" evidence="1">
    <location>
        <position position="214"/>
    </location>
    <ligand>
        <name>substrate</name>
    </ligand>
</feature>
<feature type="binding site" evidence="1">
    <location>
        <position position="215"/>
    </location>
    <ligand>
        <name>substrate</name>
    </ligand>
</feature>
<organism>
    <name type="scientific">Lactobacillus delbrueckii subsp. bulgaricus (strain ATCC 11842 / DSM 20081 / BCRC 10696 / JCM 1002 / NBRC 13953 / NCIMB 11778 / NCTC 12712 / WDCM 00102 / Lb 14)</name>
    <dbReference type="NCBI Taxonomy" id="390333"/>
    <lineage>
        <taxon>Bacteria</taxon>
        <taxon>Bacillati</taxon>
        <taxon>Bacillota</taxon>
        <taxon>Bacilli</taxon>
        <taxon>Lactobacillales</taxon>
        <taxon>Lactobacillaceae</taxon>
        <taxon>Lactobacillus</taxon>
    </lineage>
</organism>
<name>PYRF_LACDA</name>
<comment type="function">
    <text evidence="1">Catalyzes the decarboxylation of orotidine 5'-monophosphate (OMP) to uridine 5'-monophosphate (UMP).</text>
</comment>
<comment type="catalytic activity">
    <reaction evidence="1">
        <text>orotidine 5'-phosphate + H(+) = UMP + CO2</text>
        <dbReference type="Rhea" id="RHEA:11596"/>
        <dbReference type="ChEBI" id="CHEBI:15378"/>
        <dbReference type="ChEBI" id="CHEBI:16526"/>
        <dbReference type="ChEBI" id="CHEBI:57538"/>
        <dbReference type="ChEBI" id="CHEBI:57865"/>
        <dbReference type="EC" id="4.1.1.23"/>
    </reaction>
</comment>
<comment type="pathway">
    <text evidence="1">Pyrimidine metabolism; UMP biosynthesis via de novo pathway; UMP from orotate: step 2/2.</text>
</comment>
<comment type="subunit">
    <text evidence="1">Homodimer.</text>
</comment>
<comment type="similarity">
    <text evidence="1">Belongs to the OMP decarboxylase family. Type 1 subfamily.</text>
</comment>
<reference key="1">
    <citation type="journal article" date="2006" name="Proc. Natl. Acad. Sci. U.S.A.">
        <title>The complete genome sequence of Lactobacillus bulgaricus reveals extensive and ongoing reductive evolution.</title>
        <authorList>
            <person name="van de Guchte M."/>
            <person name="Penaud S."/>
            <person name="Grimaldi C."/>
            <person name="Barbe V."/>
            <person name="Bryson K."/>
            <person name="Nicolas P."/>
            <person name="Robert C."/>
            <person name="Oztas S."/>
            <person name="Mangenot S."/>
            <person name="Couloux A."/>
            <person name="Loux V."/>
            <person name="Dervyn R."/>
            <person name="Bossy R."/>
            <person name="Bolotin A."/>
            <person name="Batto J.-M."/>
            <person name="Walunas T."/>
            <person name="Gibrat J.-F."/>
            <person name="Bessieres P."/>
            <person name="Weissenbach J."/>
            <person name="Ehrlich S.D."/>
            <person name="Maguin E."/>
        </authorList>
    </citation>
    <scope>NUCLEOTIDE SEQUENCE [LARGE SCALE GENOMIC DNA]</scope>
    <source>
        <strain>ATCC 11842 / DSM 20081 / BCRC 10696 / JCM 1002 / NBRC 13953 / NCIMB 11778 / NCTC 12712 / WDCM 00102 / Lb 14</strain>
    </source>
</reference>
<sequence length="240" mass="26628">MNKPLFIALDYDDQEKMWLFLNQLKDKQGLHVKLGMEMFYQYGPEIVRDLSAKGYQIFLDLKLHDIPNTVKRTAHQLAALGVYCTTVHALGGKQMIQAAKEGLIEGTPAGKPVPKLLAVTELTSISEEVLKNEQHCSLNLADEVKSLAHQAQEAEADGIICSPLEVKAMKSEFSDDFMFVTPGIRPKSYQKDDQARVATPGQARENGSTAIVVGRPITQAADPQKAYEEILKDWSKNDAK</sequence>
<keyword id="KW-0210">Decarboxylase</keyword>
<keyword id="KW-0456">Lyase</keyword>
<keyword id="KW-0665">Pyrimidine biosynthesis</keyword>
<keyword id="KW-1185">Reference proteome</keyword>
<gene>
    <name evidence="1" type="primary">pyrF</name>
    <name type="ordered locus">Ldb1531</name>
</gene>